<comment type="function">
    <text evidence="1">Functions in the biosynthesis of branched-chain amino acids. Catalyzes the dehydration of (2R,3R)-2,3-dihydroxy-3-methylpentanoate (2,3-dihydroxy-3-methylvalerate) into 2-oxo-3-methylpentanoate (2-oxo-3-methylvalerate) and of (2R)-2,3-dihydroxy-3-methylbutanoate (2,3-dihydroxyisovalerate) into 2-oxo-3-methylbutanoate (2-oxoisovalerate), the penultimate precursor to L-isoleucine and L-valine, respectively.</text>
</comment>
<comment type="catalytic activity">
    <reaction evidence="1">
        <text>(2R)-2,3-dihydroxy-3-methylbutanoate = 3-methyl-2-oxobutanoate + H2O</text>
        <dbReference type="Rhea" id="RHEA:24809"/>
        <dbReference type="ChEBI" id="CHEBI:11851"/>
        <dbReference type="ChEBI" id="CHEBI:15377"/>
        <dbReference type="ChEBI" id="CHEBI:49072"/>
        <dbReference type="EC" id="4.2.1.9"/>
    </reaction>
    <physiologicalReaction direction="left-to-right" evidence="1">
        <dbReference type="Rhea" id="RHEA:24810"/>
    </physiologicalReaction>
</comment>
<comment type="catalytic activity">
    <reaction evidence="1">
        <text>(2R,3R)-2,3-dihydroxy-3-methylpentanoate = (S)-3-methyl-2-oxopentanoate + H2O</text>
        <dbReference type="Rhea" id="RHEA:27694"/>
        <dbReference type="ChEBI" id="CHEBI:15377"/>
        <dbReference type="ChEBI" id="CHEBI:35146"/>
        <dbReference type="ChEBI" id="CHEBI:49258"/>
        <dbReference type="EC" id="4.2.1.9"/>
    </reaction>
    <physiologicalReaction direction="left-to-right" evidence="1">
        <dbReference type="Rhea" id="RHEA:27695"/>
    </physiologicalReaction>
</comment>
<comment type="cofactor">
    <cofactor evidence="1">
        <name>[2Fe-2S] cluster</name>
        <dbReference type="ChEBI" id="CHEBI:190135"/>
    </cofactor>
    <text evidence="1">Binds 1 [2Fe-2S] cluster per subunit. This cluster acts as a Lewis acid cofactor.</text>
</comment>
<comment type="cofactor">
    <cofactor evidence="1">
        <name>Mg(2+)</name>
        <dbReference type="ChEBI" id="CHEBI:18420"/>
    </cofactor>
</comment>
<comment type="pathway">
    <text evidence="1">Amino-acid biosynthesis; L-isoleucine biosynthesis; L-isoleucine from 2-oxobutanoate: step 3/4.</text>
</comment>
<comment type="pathway">
    <text evidence="1">Amino-acid biosynthesis; L-valine biosynthesis; L-valine from pyruvate: step 3/4.</text>
</comment>
<comment type="subunit">
    <text evidence="1">Homodimer.</text>
</comment>
<comment type="similarity">
    <text evidence="1">Belongs to the IlvD/Edd family.</text>
</comment>
<evidence type="ECO:0000255" key="1">
    <source>
        <dbReference type="HAMAP-Rule" id="MF_00012"/>
    </source>
</evidence>
<dbReference type="EC" id="4.2.1.9" evidence="1"/>
<dbReference type="EMBL" id="CP001056">
    <property type="protein sequence ID" value="ACD23733.1"/>
    <property type="molecule type" value="Genomic_DNA"/>
</dbReference>
<dbReference type="SMR" id="B2TIR2"/>
<dbReference type="KEGG" id="cbk:CLL_A0325"/>
<dbReference type="PATRIC" id="fig|935198.13.peg.300"/>
<dbReference type="HOGENOM" id="CLU_014271_4_2_9"/>
<dbReference type="UniPathway" id="UPA00047">
    <property type="reaction ID" value="UER00057"/>
</dbReference>
<dbReference type="UniPathway" id="UPA00049">
    <property type="reaction ID" value="UER00061"/>
</dbReference>
<dbReference type="Proteomes" id="UP000001195">
    <property type="component" value="Chromosome"/>
</dbReference>
<dbReference type="GO" id="GO:0005829">
    <property type="term" value="C:cytosol"/>
    <property type="evidence" value="ECO:0007669"/>
    <property type="project" value="TreeGrafter"/>
</dbReference>
<dbReference type="GO" id="GO:0051537">
    <property type="term" value="F:2 iron, 2 sulfur cluster binding"/>
    <property type="evidence" value="ECO:0007669"/>
    <property type="project" value="UniProtKB-UniRule"/>
</dbReference>
<dbReference type="GO" id="GO:0004160">
    <property type="term" value="F:dihydroxy-acid dehydratase activity"/>
    <property type="evidence" value="ECO:0007669"/>
    <property type="project" value="UniProtKB-UniRule"/>
</dbReference>
<dbReference type="GO" id="GO:0000287">
    <property type="term" value="F:magnesium ion binding"/>
    <property type="evidence" value="ECO:0007669"/>
    <property type="project" value="UniProtKB-UniRule"/>
</dbReference>
<dbReference type="GO" id="GO:0009097">
    <property type="term" value="P:isoleucine biosynthetic process"/>
    <property type="evidence" value="ECO:0007669"/>
    <property type="project" value="UniProtKB-UniRule"/>
</dbReference>
<dbReference type="GO" id="GO:0009099">
    <property type="term" value="P:L-valine biosynthetic process"/>
    <property type="evidence" value="ECO:0007669"/>
    <property type="project" value="UniProtKB-UniRule"/>
</dbReference>
<dbReference type="FunFam" id="3.50.30.80:FF:000001">
    <property type="entry name" value="Dihydroxy-acid dehydratase"/>
    <property type="match status" value="1"/>
</dbReference>
<dbReference type="Gene3D" id="3.50.30.80">
    <property type="entry name" value="IlvD/EDD C-terminal domain-like"/>
    <property type="match status" value="1"/>
</dbReference>
<dbReference type="HAMAP" id="MF_00012">
    <property type="entry name" value="IlvD"/>
    <property type="match status" value="1"/>
</dbReference>
<dbReference type="InterPro" id="IPR042096">
    <property type="entry name" value="Dihydro-acid_dehy_C"/>
</dbReference>
<dbReference type="InterPro" id="IPR004404">
    <property type="entry name" value="DihydroxyA_deHydtase"/>
</dbReference>
<dbReference type="InterPro" id="IPR020558">
    <property type="entry name" value="DiOHA_6PGluconate_deHydtase_CS"/>
</dbReference>
<dbReference type="InterPro" id="IPR056740">
    <property type="entry name" value="ILV_EDD_C"/>
</dbReference>
<dbReference type="InterPro" id="IPR000581">
    <property type="entry name" value="ILV_EDD_N"/>
</dbReference>
<dbReference type="InterPro" id="IPR037237">
    <property type="entry name" value="IlvD/EDD_N"/>
</dbReference>
<dbReference type="NCBIfam" id="TIGR00110">
    <property type="entry name" value="ilvD"/>
    <property type="match status" value="1"/>
</dbReference>
<dbReference type="NCBIfam" id="NF002068">
    <property type="entry name" value="PRK00911.1"/>
    <property type="match status" value="1"/>
</dbReference>
<dbReference type="PANTHER" id="PTHR43661">
    <property type="entry name" value="D-XYLONATE DEHYDRATASE"/>
    <property type="match status" value="1"/>
</dbReference>
<dbReference type="PANTHER" id="PTHR43661:SF3">
    <property type="entry name" value="D-XYLONATE DEHYDRATASE YAGF-RELATED"/>
    <property type="match status" value="1"/>
</dbReference>
<dbReference type="Pfam" id="PF24877">
    <property type="entry name" value="ILV_EDD_C"/>
    <property type="match status" value="1"/>
</dbReference>
<dbReference type="Pfam" id="PF00920">
    <property type="entry name" value="ILVD_EDD_N"/>
    <property type="match status" value="1"/>
</dbReference>
<dbReference type="SUPFAM" id="SSF143975">
    <property type="entry name" value="IlvD/EDD N-terminal domain-like"/>
    <property type="match status" value="1"/>
</dbReference>
<dbReference type="SUPFAM" id="SSF52016">
    <property type="entry name" value="LeuD/IlvD-like"/>
    <property type="match status" value="1"/>
</dbReference>
<dbReference type="PROSITE" id="PS00886">
    <property type="entry name" value="ILVD_EDD_1"/>
    <property type="match status" value="1"/>
</dbReference>
<dbReference type="PROSITE" id="PS00887">
    <property type="entry name" value="ILVD_EDD_2"/>
    <property type="match status" value="1"/>
</dbReference>
<name>ILVD_CLOBB</name>
<accession>B2TIR2</accession>
<gene>
    <name evidence="1" type="primary">ilvD</name>
    <name type="ordered locus">CLL_A0325</name>
</gene>
<protein>
    <recommendedName>
        <fullName evidence="1">Dihydroxy-acid dehydratase</fullName>
        <shortName evidence="1">DAD</shortName>
        <ecNumber evidence="1">4.2.1.9</ecNumber>
    </recommendedName>
</protein>
<proteinExistence type="inferred from homology"/>
<organism>
    <name type="scientific">Clostridium botulinum (strain Eklund 17B / Type B)</name>
    <dbReference type="NCBI Taxonomy" id="935198"/>
    <lineage>
        <taxon>Bacteria</taxon>
        <taxon>Bacillati</taxon>
        <taxon>Bacillota</taxon>
        <taxon>Clostridia</taxon>
        <taxon>Eubacteriales</taxon>
        <taxon>Clostridiaceae</taxon>
        <taxon>Clostridium</taxon>
    </lineage>
</organism>
<reference key="1">
    <citation type="submission" date="2008-04" db="EMBL/GenBank/DDBJ databases">
        <title>Complete sequence of Clostridium botulinum strain Eklund.</title>
        <authorList>
            <person name="Brinkac L.M."/>
            <person name="Brown J.L."/>
            <person name="Bruce D."/>
            <person name="Detter C."/>
            <person name="Munk C."/>
            <person name="Smith L.A."/>
            <person name="Smith T.J."/>
            <person name="Sutton G."/>
            <person name="Brettin T.S."/>
        </authorList>
    </citation>
    <scope>NUCLEOTIDE SEQUENCE [LARGE SCALE GENOMIC DNA]</scope>
    <source>
        <strain>Eklund 17B / Type B</strain>
    </source>
</reference>
<feature type="chain" id="PRO_1000089377" description="Dihydroxy-acid dehydratase">
    <location>
        <begin position="1"/>
        <end position="552"/>
    </location>
</feature>
<feature type="active site" description="Proton acceptor" evidence="1">
    <location>
        <position position="468"/>
    </location>
</feature>
<feature type="binding site" evidence="1">
    <location>
        <position position="78"/>
    </location>
    <ligand>
        <name>Mg(2+)</name>
        <dbReference type="ChEBI" id="CHEBI:18420"/>
    </ligand>
</feature>
<feature type="binding site" evidence="1">
    <location>
        <position position="119"/>
    </location>
    <ligand>
        <name>[2Fe-2S] cluster</name>
        <dbReference type="ChEBI" id="CHEBI:190135"/>
    </ligand>
</feature>
<feature type="binding site" evidence="1">
    <location>
        <position position="120"/>
    </location>
    <ligand>
        <name>Mg(2+)</name>
        <dbReference type="ChEBI" id="CHEBI:18420"/>
    </ligand>
</feature>
<feature type="binding site" description="via carbamate group" evidence="1">
    <location>
        <position position="121"/>
    </location>
    <ligand>
        <name>Mg(2+)</name>
        <dbReference type="ChEBI" id="CHEBI:18420"/>
    </ligand>
</feature>
<feature type="binding site" evidence="1">
    <location>
        <position position="191"/>
    </location>
    <ligand>
        <name>[2Fe-2S] cluster</name>
        <dbReference type="ChEBI" id="CHEBI:190135"/>
    </ligand>
</feature>
<feature type="binding site" evidence="1">
    <location>
        <position position="442"/>
    </location>
    <ligand>
        <name>Mg(2+)</name>
        <dbReference type="ChEBI" id="CHEBI:18420"/>
    </ligand>
</feature>
<feature type="modified residue" description="N6-carboxylysine" evidence="1">
    <location>
        <position position="121"/>
    </location>
</feature>
<sequence length="552" mass="58518">MKSDAIKKGPGKAAQRSLLKALGLTNEEISRPIIGIVSSQNEIIPGHMNLDKITEAVRKGILMSGGTPLAIPTIGVCDGIAMGQEGMKYSLVTRELIADSIECMAKAHAFDALVLIPNCDKIVPGMVMGALRVNVPSVVISGGPMLAGKYKGKDISLTTMFEAVGSYENGTMDEKELCDLEECACPTCGSCSGMFTANSMNCLCEVLGIALPGNGTIPAVFSERIRLAKRAGMAVMDMLKNDIKPRDIINEKSIMNALKADMALGCSTNSVLHITAIANEAKVNMNLDIINDLSSKTPDLCKLAPASNVHIENLYAAGGITAMMNELSKKDILDLDCITVTGKTQGENIKGVTVKDYEVIRPIDNPYSKNGGIAILRGNLAPDGAVVKRAAVLPEMLVHEGPAIVFNSEEEANEAIFNKKINPGDVIVIRYEGPKGGPGMREMLQATAAIAGMGLDDSVALITDGRFSGATRGASIGHVSPEAASGGMIGLIEDGDIISIDINNAKLEVKLSYEEIQRRKLKFKPIEPKVKEGYLARYAKLVSSASEGAILK</sequence>
<keyword id="KW-0001">2Fe-2S</keyword>
<keyword id="KW-0028">Amino-acid biosynthesis</keyword>
<keyword id="KW-0100">Branched-chain amino acid biosynthesis</keyword>
<keyword id="KW-0408">Iron</keyword>
<keyword id="KW-0411">Iron-sulfur</keyword>
<keyword id="KW-0456">Lyase</keyword>
<keyword id="KW-0460">Magnesium</keyword>
<keyword id="KW-0479">Metal-binding</keyword>